<accession>Q6GR34</accession>
<sequence length="167" mass="18262">MDKLTIISGCLFLAADIFAIASIANPDWINTGESAGALTVGLVRQCQTIHGRDRICIPPRLPPEWVTTLFFIIMGIISLTVTCGLLVASHWRREATKYARWIAFTGMILFCMAALIFPIGFYINEVGGQPYKLPNNTVVGSSYVLFVLSIFFTIVGLLFAGKVCLPG</sequence>
<organism>
    <name type="scientific">Xenopus laevis</name>
    <name type="common">African clawed frog</name>
    <dbReference type="NCBI Taxonomy" id="8355"/>
    <lineage>
        <taxon>Eukaryota</taxon>
        <taxon>Metazoa</taxon>
        <taxon>Chordata</taxon>
        <taxon>Craniata</taxon>
        <taxon>Vertebrata</taxon>
        <taxon>Euteleostomi</taxon>
        <taxon>Amphibia</taxon>
        <taxon>Batrachia</taxon>
        <taxon>Anura</taxon>
        <taxon>Pipoidea</taxon>
        <taxon>Pipidae</taxon>
        <taxon>Xenopodinae</taxon>
        <taxon>Xenopus</taxon>
        <taxon>Xenopus</taxon>
    </lineage>
</organism>
<protein>
    <recommendedName>
        <fullName>Uncharacterized protein C16orf52 homolog A</fullName>
    </recommendedName>
</protein>
<name>CP52A_XENLA</name>
<reference key="1">
    <citation type="submission" date="2004-05" db="EMBL/GenBank/DDBJ databases">
        <authorList>
            <consortium name="NIH - Xenopus Gene Collection (XGC) project"/>
        </authorList>
    </citation>
    <scope>NUCLEOTIDE SEQUENCE [LARGE SCALE MRNA]</scope>
    <source>
        <tissue>Ovary</tissue>
    </source>
</reference>
<feature type="chain" id="PRO_0000271085" description="Uncharacterized protein C16orf52 homolog A">
    <location>
        <begin position="1"/>
        <end position="167"/>
    </location>
</feature>
<keyword id="KW-1185">Reference proteome</keyword>
<proteinExistence type="evidence at transcript level"/>
<dbReference type="EMBL" id="BC071100">
    <property type="protein sequence ID" value="AAH71100.1"/>
    <property type="molecule type" value="mRNA"/>
</dbReference>
<dbReference type="RefSeq" id="NP_001085337.1">
    <property type="nucleotide sequence ID" value="NM_001091868.1"/>
</dbReference>
<dbReference type="SMR" id="Q6GR34"/>
<dbReference type="DNASU" id="443762"/>
<dbReference type="GeneID" id="443762"/>
<dbReference type="KEGG" id="xla:443762"/>
<dbReference type="AGR" id="Xenbase:XB-GENE-6251881"/>
<dbReference type="CTD" id="443762"/>
<dbReference type="Xenbase" id="XB-GENE-6251881">
    <property type="gene designation" value="mosmo.S"/>
</dbReference>
<dbReference type="OMA" id="ICIPPRL"/>
<dbReference type="OrthoDB" id="8768722at2759"/>
<dbReference type="Proteomes" id="UP000186698">
    <property type="component" value="Chromosome 9_10S"/>
</dbReference>
<dbReference type="Bgee" id="443762">
    <property type="expression patterns" value="Expressed in gastrula and 19 other cell types or tissues"/>
</dbReference>
<dbReference type="GO" id="GO:0060170">
    <property type="term" value="C:ciliary membrane"/>
    <property type="evidence" value="ECO:0000318"/>
    <property type="project" value="GO_Central"/>
</dbReference>
<dbReference type="GO" id="GO:0005794">
    <property type="term" value="C:Golgi apparatus"/>
    <property type="evidence" value="ECO:0000318"/>
    <property type="project" value="GO_Central"/>
</dbReference>
<dbReference type="GO" id="GO:0045879">
    <property type="term" value="P:negative regulation of smoothened signaling pathway"/>
    <property type="evidence" value="ECO:0000318"/>
    <property type="project" value="GO_Central"/>
</dbReference>
<dbReference type="FunFam" id="1.20.140.150:FF:000006">
    <property type="entry name" value="uncharacterized protein C16orf52 homolog"/>
    <property type="match status" value="1"/>
</dbReference>
<dbReference type="Gene3D" id="1.20.140.150">
    <property type="match status" value="1"/>
</dbReference>
<dbReference type="InterPro" id="IPR037663">
    <property type="entry name" value="Mosmo"/>
</dbReference>
<dbReference type="PANTHER" id="PTHR31186">
    <property type="entry name" value="MODULATOR OF SMOOTHENED PROTEIN"/>
    <property type="match status" value="1"/>
</dbReference>
<dbReference type="PANTHER" id="PTHR31186:SF1">
    <property type="entry name" value="MODULATOR OF SMOOTHENED PROTEIN"/>
    <property type="match status" value="1"/>
</dbReference>
<dbReference type="Pfam" id="PF18800">
    <property type="entry name" value="Atthog"/>
    <property type="match status" value="1"/>
</dbReference>